<accession>Q5E206</accession>
<comment type="function">
    <text evidence="1">Removes the pyruvyl group from chorismate, with concomitant aromatization of the ring, to provide 4-hydroxybenzoate (4HB) for the ubiquinone pathway.</text>
</comment>
<comment type="catalytic activity">
    <reaction evidence="1">
        <text>chorismate = 4-hydroxybenzoate + pyruvate</text>
        <dbReference type="Rhea" id="RHEA:16505"/>
        <dbReference type="ChEBI" id="CHEBI:15361"/>
        <dbReference type="ChEBI" id="CHEBI:17879"/>
        <dbReference type="ChEBI" id="CHEBI:29748"/>
        <dbReference type="EC" id="4.1.3.40"/>
    </reaction>
</comment>
<comment type="pathway">
    <text evidence="1">Cofactor biosynthesis; ubiquinone biosynthesis.</text>
</comment>
<comment type="subcellular location">
    <subcellularLocation>
        <location evidence="1">Cytoplasm</location>
    </subcellularLocation>
</comment>
<comment type="similarity">
    <text evidence="1">Belongs to the UbiC family.</text>
</comment>
<protein>
    <recommendedName>
        <fullName evidence="1">Probable chorismate pyruvate-lyase</fullName>
        <shortName evidence="1">CL</shortName>
        <shortName evidence="1">CPL</shortName>
        <ecNumber evidence="1">4.1.3.40</ecNumber>
    </recommendedName>
</protein>
<keyword id="KW-0963">Cytoplasm</keyword>
<keyword id="KW-0456">Lyase</keyword>
<keyword id="KW-0670">Pyruvate</keyword>
<keyword id="KW-1185">Reference proteome</keyword>
<keyword id="KW-0831">Ubiquinone biosynthesis</keyword>
<reference key="1">
    <citation type="journal article" date="2005" name="Proc. Natl. Acad. Sci. U.S.A.">
        <title>Complete genome sequence of Vibrio fischeri: a symbiotic bacterium with pathogenic congeners.</title>
        <authorList>
            <person name="Ruby E.G."/>
            <person name="Urbanowski M."/>
            <person name="Campbell J."/>
            <person name="Dunn A."/>
            <person name="Faini M."/>
            <person name="Gunsalus R."/>
            <person name="Lostroh P."/>
            <person name="Lupp C."/>
            <person name="McCann J."/>
            <person name="Millikan D."/>
            <person name="Schaefer A."/>
            <person name="Stabb E."/>
            <person name="Stevens A."/>
            <person name="Visick K."/>
            <person name="Whistler C."/>
            <person name="Greenberg E.P."/>
        </authorList>
    </citation>
    <scope>NUCLEOTIDE SEQUENCE [LARGE SCALE GENOMIC DNA]</scope>
    <source>
        <strain>ATCC 700601 / ES114</strain>
    </source>
</reference>
<evidence type="ECO:0000255" key="1">
    <source>
        <dbReference type="HAMAP-Rule" id="MF_01632"/>
    </source>
</evidence>
<dbReference type="EC" id="4.1.3.40" evidence="1"/>
<dbReference type="EMBL" id="CP000020">
    <property type="protein sequence ID" value="AAW86940.1"/>
    <property type="molecule type" value="Genomic_DNA"/>
</dbReference>
<dbReference type="RefSeq" id="WP_011262812.1">
    <property type="nucleotide sequence ID" value="NC_006840.2"/>
</dbReference>
<dbReference type="RefSeq" id="YP_205828.1">
    <property type="nucleotide sequence ID" value="NC_006840.2"/>
</dbReference>
<dbReference type="SMR" id="Q5E206"/>
<dbReference type="STRING" id="312309.VF_2445"/>
<dbReference type="EnsemblBacteria" id="AAW86940">
    <property type="protein sequence ID" value="AAW86940"/>
    <property type="gene ID" value="VF_2445"/>
</dbReference>
<dbReference type="GeneID" id="54165176"/>
<dbReference type="KEGG" id="vfi:VF_2445"/>
<dbReference type="PATRIC" id="fig|312309.11.peg.2473"/>
<dbReference type="eggNOG" id="COG3161">
    <property type="taxonomic scope" value="Bacteria"/>
</dbReference>
<dbReference type="HOGENOM" id="CLU_096824_1_1_6"/>
<dbReference type="OrthoDB" id="9789493at2"/>
<dbReference type="UniPathway" id="UPA00232"/>
<dbReference type="Proteomes" id="UP000000537">
    <property type="component" value="Chromosome I"/>
</dbReference>
<dbReference type="GO" id="GO:0005829">
    <property type="term" value="C:cytosol"/>
    <property type="evidence" value="ECO:0007669"/>
    <property type="project" value="TreeGrafter"/>
</dbReference>
<dbReference type="GO" id="GO:0008813">
    <property type="term" value="F:chorismate lyase activity"/>
    <property type="evidence" value="ECO:0007669"/>
    <property type="project" value="UniProtKB-UniRule"/>
</dbReference>
<dbReference type="GO" id="GO:0042866">
    <property type="term" value="P:pyruvate biosynthetic process"/>
    <property type="evidence" value="ECO:0007669"/>
    <property type="project" value="UniProtKB-UniRule"/>
</dbReference>
<dbReference type="GO" id="GO:0006744">
    <property type="term" value="P:ubiquinone biosynthetic process"/>
    <property type="evidence" value="ECO:0007669"/>
    <property type="project" value="UniProtKB-UniRule"/>
</dbReference>
<dbReference type="Gene3D" id="3.40.1410.10">
    <property type="entry name" value="Chorismate lyase-like"/>
    <property type="match status" value="1"/>
</dbReference>
<dbReference type="HAMAP" id="MF_01632">
    <property type="entry name" value="UbiC"/>
    <property type="match status" value="1"/>
</dbReference>
<dbReference type="InterPro" id="IPR007440">
    <property type="entry name" value="Chorismate--pyruvate_lyase"/>
</dbReference>
<dbReference type="InterPro" id="IPR028978">
    <property type="entry name" value="Chorismate_lyase_/UTRA_dom_sf"/>
</dbReference>
<dbReference type="PANTHER" id="PTHR38683">
    <property type="entry name" value="CHORISMATE PYRUVATE-LYASE"/>
    <property type="match status" value="1"/>
</dbReference>
<dbReference type="PANTHER" id="PTHR38683:SF1">
    <property type="entry name" value="CHORISMATE PYRUVATE-LYASE"/>
    <property type="match status" value="1"/>
</dbReference>
<dbReference type="Pfam" id="PF04345">
    <property type="entry name" value="Chor_lyase"/>
    <property type="match status" value="1"/>
</dbReference>
<dbReference type="SUPFAM" id="SSF64288">
    <property type="entry name" value="Chorismate lyase-like"/>
    <property type="match status" value="1"/>
</dbReference>
<organism>
    <name type="scientific">Aliivibrio fischeri (strain ATCC 700601 / ES114)</name>
    <name type="common">Vibrio fischeri</name>
    <dbReference type="NCBI Taxonomy" id="312309"/>
    <lineage>
        <taxon>Bacteria</taxon>
        <taxon>Pseudomonadati</taxon>
        <taxon>Pseudomonadota</taxon>
        <taxon>Gammaproteobacteria</taxon>
        <taxon>Vibrionales</taxon>
        <taxon>Vibrionaceae</taxon>
        <taxon>Aliivibrio</taxon>
    </lineage>
</organism>
<gene>
    <name evidence="1" type="primary">ubiC</name>
    <name type="ordered locus">VF_2445</name>
</gene>
<name>UBIC_ALIF1</name>
<feature type="chain" id="PRO_0000240581" description="Probable chorismate pyruvate-lyase">
    <location>
        <begin position="1"/>
        <end position="180"/>
    </location>
</feature>
<feature type="binding site" evidence="1">
    <location>
        <position position="82"/>
    </location>
    <ligand>
        <name>substrate</name>
    </ligand>
</feature>
<feature type="binding site" evidence="1">
    <location>
        <position position="120"/>
    </location>
    <ligand>
        <name>substrate</name>
    </ligand>
</feature>
<feature type="binding site" evidence="1">
    <location>
        <position position="165"/>
    </location>
    <ligand>
        <name>substrate</name>
    </ligand>
</feature>
<proteinExistence type="inferred from homology"/>
<sequence length="180" mass="20606">MSDINSWCASVLKRVQWQEADTFECSNDLQRYWLLGLDSLSRRLEQHCNVLSVSVLDNTHVNPDKLTVEEEALLSGEVCLRRKVILKGDQQSWVYGRTLIPLSSLQDQPHDLTRQGHTPLGITVFSAQSAHRDKLQVGTIMTERGELFARRSRLWMNNKPMLVAELFLPEAPIYSKEVES</sequence>